<dbReference type="EC" id="3.6.4.-"/>
<dbReference type="EMBL" id="AY623031">
    <property type="protein sequence ID" value="AAT46048.1"/>
    <property type="molecule type" value="mRNA"/>
</dbReference>
<dbReference type="EMBL" id="AY623032">
    <property type="protein sequence ID" value="AAT46049.1"/>
    <property type="molecule type" value="mRNA"/>
</dbReference>
<dbReference type="RefSeq" id="NP_001011913.1">
    <property type="nucleotide sequence ID" value="NM_001011913.2"/>
</dbReference>
<dbReference type="RefSeq" id="NP_001380737.1">
    <property type="nucleotide sequence ID" value="NM_001393808.1"/>
</dbReference>
<dbReference type="RefSeq" id="NP_001380738.1">
    <property type="nucleotide sequence ID" value="NM_001393809.1"/>
</dbReference>
<dbReference type="RefSeq" id="XP_006251538.1">
    <property type="nucleotide sequence ID" value="XM_006251476.2"/>
</dbReference>
<dbReference type="RefSeq" id="XP_006251539.1">
    <property type="nucleotide sequence ID" value="XM_006251477.5"/>
</dbReference>
<dbReference type="RefSeq" id="XP_008768483.1">
    <property type="nucleotide sequence ID" value="XM_008770261.2"/>
</dbReference>
<dbReference type="SMR" id="Q6GX84"/>
<dbReference type="FunCoup" id="Q6GX84">
    <property type="interactions" value="1855"/>
</dbReference>
<dbReference type="STRING" id="10116.ENSRNOP00000005857"/>
<dbReference type="PhosphoSitePlus" id="Q6GX84"/>
<dbReference type="PaxDb" id="10116-ENSRNOP00000005857"/>
<dbReference type="Ensembl" id="ENSRNOT00000005857.5">
    <property type="protein sequence ID" value="ENSRNOP00000005857.3"/>
    <property type="gene ID" value="ENSRNOG00000004440.5"/>
</dbReference>
<dbReference type="Ensembl" id="ENSRNOT00000107994.1">
    <property type="protein sequence ID" value="ENSRNOP00000078689.1"/>
    <property type="gene ID" value="ENSRNOG00000004440.5"/>
</dbReference>
<dbReference type="GeneID" id="289777"/>
<dbReference type="KEGG" id="rno:289777"/>
<dbReference type="UCSC" id="RGD:1307112">
    <property type="organism name" value="rat"/>
</dbReference>
<dbReference type="AGR" id="RGD:1307112"/>
<dbReference type="CTD" id="63979"/>
<dbReference type="RGD" id="1307112">
    <property type="gene designation" value="Fignl1"/>
</dbReference>
<dbReference type="eggNOG" id="KOG0740">
    <property type="taxonomic scope" value="Eukaryota"/>
</dbReference>
<dbReference type="GeneTree" id="ENSGT00940000161552"/>
<dbReference type="HOGENOM" id="CLU_000688_21_10_1"/>
<dbReference type="InParanoid" id="Q6GX84"/>
<dbReference type="OMA" id="YSDKWES"/>
<dbReference type="PhylomeDB" id="Q6GX84"/>
<dbReference type="TreeFam" id="TF105013"/>
<dbReference type="Reactome" id="R-RNO-5693568">
    <property type="pathway name" value="Resolution of D-loop Structures through Holliday Junction Intermediates"/>
</dbReference>
<dbReference type="Reactome" id="R-RNO-912446">
    <property type="pathway name" value="Meiotic recombination"/>
</dbReference>
<dbReference type="PRO" id="PR:Q6GX84"/>
<dbReference type="Proteomes" id="UP000002494">
    <property type="component" value="Chromosome 14"/>
</dbReference>
<dbReference type="Bgee" id="ENSRNOG00000004440">
    <property type="expression patterns" value="Expressed in thymus and 16 other cell types or tissues"/>
</dbReference>
<dbReference type="GO" id="GO:0005737">
    <property type="term" value="C:cytoplasm"/>
    <property type="evidence" value="ECO:0000250"/>
    <property type="project" value="UniProtKB"/>
</dbReference>
<dbReference type="GO" id="GO:0000228">
    <property type="term" value="C:nuclear chromosome"/>
    <property type="evidence" value="ECO:0000250"/>
    <property type="project" value="UniProtKB"/>
</dbReference>
<dbReference type="GO" id="GO:0005634">
    <property type="term" value="C:nucleus"/>
    <property type="evidence" value="ECO:0000250"/>
    <property type="project" value="UniProtKB"/>
</dbReference>
<dbReference type="GO" id="GO:0048471">
    <property type="term" value="C:perinuclear region of cytoplasm"/>
    <property type="evidence" value="ECO:0000250"/>
    <property type="project" value="UniProtKB"/>
</dbReference>
<dbReference type="GO" id="GO:0005524">
    <property type="term" value="F:ATP binding"/>
    <property type="evidence" value="ECO:0007669"/>
    <property type="project" value="UniProtKB-KW"/>
</dbReference>
<dbReference type="GO" id="GO:0016887">
    <property type="term" value="F:ATP hydrolysis activity"/>
    <property type="evidence" value="ECO:0000318"/>
    <property type="project" value="GO_Central"/>
</dbReference>
<dbReference type="GO" id="GO:0016787">
    <property type="term" value="F:hydrolase activity"/>
    <property type="evidence" value="ECO:0000250"/>
    <property type="project" value="UniProtKB"/>
</dbReference>
<dbReference type="GO" id="GO:0000287">
    <property type="term" value="F:magnesium ion binding"/>
    <property type="evidence" value="ECO:0000250"/>
    <property type="project" value="UniProtKB"/>
</dbReference>
<dbReference type="GO" id="GO:0008568">
    <property type="term" value="F:microtubule severing ATPase activity"/>
    <property type="evidence" value="ECO:0000318"/>
    <property type="project" value="GO_Central"/>
</dbReference>
<dbReference type="GO" id="GO:0046034">
    <property type="term" value="P:ATP metabolic process"/>
    <property type="evidence" value="ECO:0000250"/>
    <property type="project" value="UniProtKB"/>
</dbReference>
<dbReference type="GO" id="GO:0071479">
    <property type="term" value="P:cellular response to ionizing radiation"/>
    <property type="evidence" value="ECO:0000250"/>
    <property type="project" value="UniProtKB"/>
</dbReference>
<dbReference type="GO" id="GO:0007140">
    <property type="term" value="P:male meiotic nuclear division"/>
    <property type="evidence" value="ECO:0000250"/>
    <property type="project" value="UniProtKB"/>
</dbReference>
<dbReference type="GO" id="GO:0043066">
    <property type="term" value="P:negative regulation of apoptotic process"/>
    <property type="evidence" value="ECO:0000250"/>
    <property type="project" value="UniProtKB"/>
</dbReference>
<dbReference type="GO" id="GO:2001243">
    <property type="term" value="P:negative regulation of intrinsic apoptotic signaling pathway"/>
    <property type="evidence" value="ECO:0000266"/>
    <property type="project" value="RGD"/>
</dbReference>
<dbReference type="GO" id="GO:0001649">
    <property type="term" value="P:osteoblast differentiation"/>
    <property type="evidence" value="ECO:0000250"/>
    <property type="project" value="UniProtKB"/>
</dbReference>
<dbReference type="GO" id="GO:0033687">
    <property type="term" value="P:osteoblast proliferation"/>
    <property type="evidence" value="ECO:0000250"/>
    <property type="project" value="UniProtKB"/>
</dbReference>
<dbReference type="GO" id="GO:0051726">
    <property type="term" value="P:regulation of cell cycle"/>
    <property type="evidence" value="ECO:0000250"/>
    <property type="project" value="UniProtKB"/>
</dbReference>
<dbReference type="GO" id="GO:0010569">
    <property type="term" value="P:regulation of double-strand break repair via homologous recombination"/>
    <property type="evidence" value="ECO:0000250"/>
    <property type="project" value="UniProtKB"/>
</dbReference>
<dbReference type="CDD" id="cd19525">
    <property type="entry name" value="RecA-like_Figl-1"/>
    <property type="match status" value="1"/>
</dbReference>
<dbReference type="FunFam" id="1.10.8.60:FF:000022">
    <property type="entry name" value="Fidgetin like 1"/>
    <property type="match status" value="1"/>
</dbReference>
<dbReference type="FunFam" id="3.40.50.300:FF:000093">
    <property type="entry name" value="Fidgetin-like 1"/>
    <property type="match status" value="1"/>
</dbReference>
<dbReference type="Gene3D" id="1.10.8.60">
    <property type="match status" value="1"/>
</dbReference>
<dbReference type="Gene3D" id="3.40.50.300">
    <property type="entry name" value="P-loop containing nucleotide triphosphate hydrolases"/>
    <property type="match status" value="1"/>
</dbReference>
<dbReference type="InterPro" id="IPR003593">
    <property type="entry name" value="AAA+_ATPase"/>
</dbReference>
<dbReference type="InterPro" id="IPR041569">
    <property type="entry name" value="AAA_lid_3"/>
</dbReference>
<dbReference type="InterPro" id="IPR003959">
    <property type="entry name" value="ATPase_AAA_core"/>
</dbReference>
<dbReference type="InterPro" id="IPR003960">
    <property type="entry name" value="ATPase_AAA_CS"/>
</dbReference>
<dbReference type="InterPro" id="IPR047858">
    <property type="entry name" value="FIGNL1_ATPase"/>
</dbReference>
<dbReference type="InterPro" id="IPR050304">
    <property type="entry name" value="MT-severing_AAA_ATPase"/>
</dbReference>
<dbReference type="InterPro" id="IPR027417">
    <property type="entry name" value="P-loop_NTPase"/>
</dbReference>
<dbReference type="InterPro" id="IPR015415">
    <property type="entry name" value="Spast_Vps4_C"/>
</dbReference>
<dbReference type="PANTHER" id="PTHR23074">
    <property type="entry name" value="AAA DOMAIN-CONTAINING"/>
    <property type="match status" value="1"/>
</dbReference>
<dbReference type="PANTHER" id="PTHR23074:SF75">
    <property type="entry name" value="DYNEIN REGULATORY COMPLEX PROTEIN 11-RELATED"/>
    <property type="match status" value="1"/>
</dbReference>
<dbReference type="Pfam" id="PF00004">
    <property type="entry name" value="AAA"/>
    <property type="match status" value="1"/>
</dbReference>
<dbReference type="Pfam" id="PF17862">
    <property type="entry name" value="AAA_lid_3"/>
    <property type="match status" value="1"/>
</dbReference>
<dbReference type="Pfam" id="PF09336">
    <property type="entry name" value="Vps4_C"/>
    <property type="match status" value="1"/>
</dbReference>
<dbReference type="SMART" id="SM00382">
    <property type="entry name" value="AAA"/>
    <property type="match status" value="1"/>
</dbReference>
<dbReference type="SUPFAM" id="SSF52540">
    <property type="entry name" value="P-loop containing nucleoside triphosphate hydrolases"/>
    <property type="match status" value="1"/>
</dbReference>
<dbReference type="PROSITE" id="PS00674">
    <property type="entry name" value="AAA"/>
    <property type="match status" value="1"/>
</dbReference>
<name>FIGL1_RAT</name>
<protein>
    <recommendedName>
        <fullName>Fidgetin-like protein 1</fullName>
        <ecNumber>3.6.4.-</ecNumber>
    </recommendedName>
</protein>
<evidence type="ECO:0000250" key="1"/>
<evidence type="ECO:0000250" key="2">
    <source>
        <dbReference type="UniProtKB" id="Q6PIW4"/>
    </source>
</evidence>
<evidence type="ECO:0000250" key="3">
    <source>
        <dbReference type="UniProtKB" id="Q8BPY9"/>
    </source>
</evidence>
<evidence type="ECO:0000256" key="4">
    <source>
        <dbReference type="SAM" id="MobiDB-lite"/>
    </source>
</evidence>
<evidence type="ECO:0000269" key="5">
    <source>
    </source>
</evidence>
<evidence type="ECO:0000305" key="6"/>
<reference key="1">
    <citation type="journal article" date="2006" name="Oncogene">
        <title>Identification of novel E2F1 target genes regulated in cell cycle-dependent and independent manners.</title>
        <authorList>
            <person name="Iwanaga R."/>
            <person name="Komori H."/>
            <person name="Ishida S."/>
            <person name="Okamura N."/>
            <person name="Nakayama K."/>
            <person name="Nakayama K."/>
            <person name="Ohtani K."/>
        </authorList>
    </citation>
    <scope>NUCLEOTIDE SEQUENCE [MRNA]</scope>
    <scope>INDUCTION</scope>
</reference>
<comment type="function">
    <text evidence="2">Involved in DNA double-strand break (DBS) repair via homologous recombination (HR). Recruited at DSB sites independently of BRCA2, RAD51 and RAD51 paralogs in a H2AX-dependent manner. May regulate osteoblast proliferation and differentiation (By similarity). May play a role in the control of male meiosis dynamic (By similarity).</text>
</comment>
<comment type="catalytic activity">
    <reaction>
        <text>ATP + H2O = ADP + phosphate + H(+)</text>
        <dbReference type="Rhea" id="RHEA:13065"/>
        <dbReference type="ChEBI" id="CHEBI:15377"/>
        <dbReference type="ChEBI" id="CHEBI:15378"/>
        <dbReference type="ChEBI" id="CHEBI:30616"/>
        <dbReference type="ChEBI" id="CHEBI:43474"/>
        <dbReference type="ChEBI" id="CHEBI:456216"/>
    </reaction>
</comment>
<comment type="cofactor">
    <cofactor evidence="1">
        <name>Mg(2+)</name>
        <dbReference type="ChEBI" id="CHEBI:18420"/>
    </cofactor>
</comment>
<comment type="subunit">
    <text evidence="2">Hexamer. Interacts (via N-terminal one-half region) with RAD51; the interaction is direct. Interacts (via N-terminal one-half region) with SPIDR (via the C-terminal region); the interaction is direct (By similarity). Interacts with FIRRM; may regulate homologous recombination (By similarity).</text>
</comment>
<comment type="subcellular location">
    <subcellularLocation>
        <location evidence="2">Nucleus</location>
    </subcellularLocation>
    <subcellularLocation>
        <location evidence="3">Cytoplasm</location>
    </subcellularLocation>
    <subcellularLocation>
        <location evidence="3">Cytoplasm</location>
        <location evidence="3">Perinuclear region</location>
    </subcellularLocation>
    <text evidence="2">Together with RAD51 and a subset of H2A histone proteins, redistributed in discrete nuclear DNA damage-induced foci after ionizing radiation (IR) treatment.</text>
</comment>
<comment type="induction">
    <text evidence="5">By E2F1 and serum stimulation.</text>
</comment>
<comment type="domain">
    <text evidence="2">The N-terminus is necessary for its recruitment to DNA damage sites.</text>
</comment>
<comment type="similarity">
    <text evidence="6">Belongs to the AAA ATPase family.</text>
</comment>
<proteinExistence type="evidence at transcript level"/>
<keyword id="KW-0007">Acetylation</keyword>
<keyword id="KW-0067">ATP-binding</keyword>
<keyword id="KW-0963">Cytoplasm</keyword>
<keyword id="KW-0378">Hydrolase</keyword>
<keyword id="KW-1017">Isopeptide bond</keyword>
<keyword id="KW-0460">Magnesium</keyword>
<keyword id="KW-0479">Metal-binding</keyword>
<keyword id="KW-0547">Nucleotide-binding</keyword>
<keyword id="KW-0539">Nucleus</keyword>
<keyword id="KW-1185">Reference proteome</keyword>
<keyword id="KW-0832">Ubl conjugation</keyword>
<feature type="chain" id="PRO_0000302725" description="Fidgetin-like protein 1">
    <location>
        <begin position="1"/>
        <end position="677"/>
    </location>
</feature>
<feature type="region of interest" description="Disordered" evidence="4">
    <location>
        <begin position="203"/>
        <end position="232"/>
    </location>
</feature>
<feature type="region of interest" description="Disordered" evidence="4">
    <location>
        <begin position="249"/>
        <end position="324"/>
    </location>
</feature>
<feature type="region of interest" description="Disordered" evidence="4">
    <location>
        <begin position="337"/>
        <end position="378"/>
    </location>
</feature>
<feature type="compositionally biased region" description="Polar residues" evidence="4">
    <location>
        <begin position="203"/>
        <end position="216"/>
    </location>
</feature>
<feature type="compositionally biased region" description="Polar residues" evidence="4">
    <location>
        <begin position="264"/>
        <end position="280"/>
    </location>
</feature>
<feature type="compositionally biased region" description="Basic and acidic residues" evidence="4">
    <location>
        <begin position="281"/>
        <end position="292"/>
    </location>
</feature>
<feature type="compositionally biased region" description="Polar residues" evidence="4">
    <location>
        <begin position="347"/>
        <end position="358"/>
    </location>
</feature>
<feature type="binding site" evidence="2">
    <location>
        <position position="407"/>
    </location>
    <ligand>
        <name>ATP</name>
        <dbReference type="ChEBI" id="CHEBI:30616"/>
    </ligand>
</feature>
<feature type="binding site" evidence="2">
    <location>
        <begin position="447"/>
        <end position="452"/>
    </location>
    <ligand>
        <name>ATP</name>
        <dbReference type="ChEBI" id="CHEBI:30616"/>
    </ligand>
</feature>
<feature type="modified residue" description="N6-acetyllysine" evidence="2">
    <location>
        <position position="341"/>
    </location>
</feature>
<feature type="cross-link" description="Glycyl lysine isopeptide (Lys-Gly) (interchain with G-Cter in SUMO2)" evidence="2">
    <location>
        <position position="226"/>
    </location>
</feature>
<accession>Q6GX84</accession>
<gene>
    <name type="primary">Fignl1</name>
    <name type="synonym">S30</name>
</gene>
<organism>
    <name type="scientific">Rattus norvegicus</name>
    <name type="common">Rat</name>
    <dbReference type="NCBI Taxonomy" id="10116"/>
    <lineage>
        <taxon>Eukaryota</taxon>
        <taxon>Metazoa</taxon>
        <taxon>Chordata</taxon>
        <taxon>Craniata</taxon>
        <taxon>Vertebrata</taxon>
        <taxon>Euteleostomi</taxon>
        <taxon>Mammalia</taxon>
        <taxon>Eutheria</taxon>
        <taxon>Euarchontoglires</taxon>
        <taxon>Glires</taxon>
        <taxon>Rodentia</taxon>
        <taxon>Myomorpha</taxon>
        <taxon>Muroidea</taxon>
        <taxon>Muridae</taxon>
        <taxon>Murinae</taxon>
        <taxon>Rattus</taxon>
    </lineage>
</organism>
<sequence>METSSSRSVQVDDWQKNYSVVASSICTPKQKADAYRALLLHIQDAYANSEISQVFATNLFKRYTEKYSAIIDSDNVVTGLNNYAESIFALAGSQQADSDKWQSGLSINNVFKMSTVQEMMQAGQKFKESLLEPADASVVMCKEPTIFEVPQLGVCGGSEEADLLSSSVHGTEKTQAIPGNSLRCSPFQSTLFPMATNTKTCLTSSAPSGESTTATFHRTPLFGNTKKEPQSFPKTSTGLNMFLSNPSCVPSGCENPRERKAFNDSDTINMLSNPTLNKAPSKTEDSGQREDNSLPTFKTAKEQLWADQKKRSHQSQHTSKSFNGAIKKSLGAGRSRGIFGKFVPPVSNKQDGSEQNGNVKPKSSRAGSAEPAHLTDDRLKNVEPRMVELIMNEIMDHGPPVHWEDIAGVEFAKATIKEIVVWPMMRPDIFTGLRGPPKGILLFGPPGTGKTLIGKCIASQSGATFFSISASSLTSKWVGEGEKMVRALFAVARCQQPAVIFIDEIDSLLSQRGDGEHESSRRIKTEFLVQLDGATTSSEDRILVVGATNRPQEIDEAARRRLVKRLYIPLPEASARKQIVVNLMSKEQCCLTDEETELVVQQSDGFSGADMTQLCREASLGPIRSLHTADIATISPDQVRPIAYIDFENAFRTVRPSVSPKDLELYENWNKTFGCGK</sequence>